<feature type="chain" id="PRO_0000255902" description="Probable chorismate pyruvate-lyase">
    <location>
        <begin position="1"/>
        <end position="190"/>
    </location>
</feature>
<feature type="binding site" evidence="1">
    <location>
        <position position="74"/>
    </location>
    <ligand>
        <name>substrate</name>
    </ligand>
</feature>
<feature type="binding site" evidence="1">
    <location>
        <position position="112"/>
    </location>
    <ligand>
        <name>substrate</name>
    </ligand>
</feature>
<feature type="binding site" evidence="1">
    <location>
        <position position="173"/>
    </location>
    <ligand>
        <name>substrate</name>
    </ligand>
</feature>
<dbReference type="EC" id="4.1.3.40" evidence="1"/>
<dbReference type="EMBL" id="BX640413">
    <property type="protein sequence ID" value="CAE41282.1"/>
    <property type="molecule type" value="Genomic_DNA"/>
</dbReference>
<dbReference type="RefSeq" id="NP_879776.1">
    <property type="nucleotide sequence ID" value="NC_002929.2"/>
</dbReference>
<dbReference type="RefSeq" id="WP_010926548.1">
    <property type="nucleotide sequence ID" value="NZ_CP039022.1"/>
</dbReference>
<dbReference type="SMR" id="Q7VZD6"/>
<dbReference type="STRING" id="257313.BP0981"/>
<dbReference type="PaxDb" id="257313-BP0981"/>
<dbReference type="KEGG" id="bpe:BP0981"/>
<dbReference type="PATRIC" id="fig|257313.5.peg.1045"/>
<dbReference type="eggNOG" id="COG3161">
    <property type="taxonomic scope" value="Bacteria"/>
</dbReference>
<dbReference type="HOGENOM" id="CLU_096824_0_0_4"/>
<dbReference type="UniPathway" id="UPA00232"/>
<dbReference type="Proteomes" id="UP000002676">
    <property type="component" value="Chromosome"/>
</dbReference>
<dbReference type="GO" id="GO:0005829">
    <property type="term" value="C:cytosol"/>
    <property type="evidence" value="ECO:0007669"/>
    <property type="project" value="TreeGrafter"/>
</dbReference>
<dbReference type="GO" id="GO:0008813">
    <property type="term" value="F:chorismate lyase activity"/>
    <property type="evidence" value="ECO:0007669"/>
    <property type="project" value="UniProtKB-UniRule"/>
</dbReference>
<dbReference type="GO" id="GO:0042866">
    <property type="term" value="P:pyruvate biosynthetic process"/>
    <property type="evidence" value="ECO:0007669"/>
    <property type="project" value="UniProtKB-UniRule"/>
</dbReference>
<dbReference type="GO" id="GO:0006744">
    <property type="term" value="P:ubiquinone biosynthetic process"/>
    <property type="evidence" value="ECO:0007669"/>
    <property type="project" value="UniProtKB-UniRule"/>
</dbReference>
<dbReference type="Gene3D" id="3.40.1410.10">
    <property type="entry name" value="Chorismate lyase-like"/>
    <property type="match status" value="1"/>
</dbReference>
<dbReference type="HAMAP" id="MF_01632">
    <property type="entry name" value="UbiC"/>
    <property type="match status" value="1"/>
</dbReference>
<dbReference type="InterPro" id="IPR007440">
    <property type="entry name" value="Chorismate--pyruvate_lyase"/>
</dbReference>
<dbReference type="InterPro" id="IPR028978">
    <property type="entry name" value="Chorismate_lyase_/UTRA_dom_sf"/>
</dbReference>
<dbReference type="PANTHER" id="PTHR38683">
    <property type="entry name" value="CHORISMATE PYRUVATE-LYASE"/>
    <property type="match status" value="1"/>
</dbReference>
<dbReference type="PANTHER" id="PTHR38683:SF1">
    <property type="entry name" value="CHORISMATE PYRUVATE-LYASE"/>
    <property type="match status" value="1"/>
</dbReference>
<dbReference type="Pfam" id="PF04345">
    <property type="entry name" value="Chor_lyase"/>
    <property type="match status" value="1"/>
</dbReference>
<dbReference type="SUPFAM" id="SSF64288">
    <property type="entry name" value="Chorismate lyase-like"/>
    <property type="match status" value="1"/>
</dbReference>
<accession>Q7VZD6</accession>
<gene>
    <name evidence="1" type="primary">ubiC</name>
    <name type="ordered locus">BP0981</name>
</gene>
<sequence length="190" mass="20877">MTTPIPLARGWLPAAPSTLDPLRKYWLFRPGALTAGLRQLGHVRLRVLAEYPTGAPRDEADGMRIAAQSPVWVREVLMSIDGVDSVVARSLTPLRASHGVWQGMRRLLTRPLADMLYHDPGIHRSVFVCRRLAAGVPFHATAIARAPAGGPEPALWARRSAFWRAGQPLLVAECFLPAFWSLARAPVAPR</sequence>
<evidence type="ECO:0000255" key="1">
    <source>
        <dbReference type="HAMAP-Rule" id="MF_01632"/>
    </source>
</evidence>
<comment type="function">
    <text evidence="1">Removes the pyruvyl group from chorismate, with concomitant aromatization of the ring, to provide 4-hydroxybenzoate (4HB) for the ubiquinone pathway.</text>
</comment>
<comment type="catalytic activity">
    <reaction evidence="1">
        <text>chorismate = 4-hydroxybenzoate + pyruvate</text>
        <dbReference type="Rhea" id="RHEA:16505"/>
        <dbReference type="ChEBI" id="CHEBI:15361"/>
        <dbReference type="ChEBI" id="CHEBI:17879"/>
        <dbReference type="ChEBI" id="CHEBI:29748"/>
        <dbReference type="EC" id="4.1.3.40"/>
    </reaction>
</comment>
<comment type="pathway">
    <text evidence="1">Cofactor biosynthesis; ubiquinone biosynthesis.</text>
</comment>
<comment type="subcellular location">
    <subcellularLocation>
        <location evidence="1">Cytoplasm</location>
    </subcellularLocation>
</comment>
<comment type="similarity">
    <text evidence="1">Belongs to the UbiC family.</text>
</comment>
<keyword id="KW-0963">Cytoplasm</keyword>
<keyword id="KW-0456">Lyase</keyword>
<keyword id="KW-0670">Pyruvate</keyword>
<keyword id="KW-1185">Reference proteome</keyword>
<keyword id="KW-0831">Ubiquinone biosynthesis</keyword>
<protein>
    <recommendedName>
        <fullName evidence="1">Probable chorismate pyruvate-lyase</fullName>
        <shortName evidence="1">CL</shortName>
        <shortName evidence="1">CPL</shortName>
        <ecNumber evidence="1">4.1.3.40</ecNumber>
    </recommendedName>
</protein>
<proteinExistence type="inferred from homology"/>
<name>UBIC_BORPE</name>
<organism>
    <name type="scientific">Bordetella pertussis (strain Tohama I / ATCC BAA-589 / NCTC 13251)</name>
    <dbReference type="NCBI Taxonomy" id="257313"/>
    <lineage>
        <taxon>Bacteria</taxon>
        <taxon>Pseudomonadati</taxon>
        <taxon>Pseudomonadota</taxon>
        <taxon>Betaproteobacteria</taxon>
        <taxon>Burkholderiales</taxon>
        <taxon>Alcaligenaceae</taxon>
        <taxon>Bordetella</taxon>
    </lineage>
</organism>
<reference key="1">
    <citation type="journal article" date="2003" name="Nat. Genet.">
        <title>Comparative analysis of the genome sequences of Bordetella pertussis, Bordetella parapertussis and Bordetella bronchiseptica.</title>
        <authorList>
            <person name="Parkhill J."/>
            <person name="Sebaihia M."/>
            <person name="Preston A."/>
            <person name="Murphy L.D."/>
            <person name="Thomson N.R."/>
            <person name="Harris D.E."/>
            <person name="Holden M.T.G."/>
            <person name="Churcher C.M."/>
            <person name="Bentley S.D."/>
            <person name="Mungall K.L."/>
            <person name="Cerdeno-Tarraga A.-M."/>
            <person name="Temple L."/>
            <person name="James K.D."/>
            <person name="Harris B."/>
            <person name="Quail M.A."/>
            <person name="Achtman M."/>
            <person name="Atkin R."/>
            <person name="Baker S."/>
            <person name="Basham D."/>
            <person name="Bason N."/>
            <person name="Cherevach I."/>
            <person name="Chillingworth T."/>
            <person name="Collins M."/>
            <person name="Cronin A."/>
            <person name="Davis P."/>
            <person name="Doggett J."/>
            <person name="Feltwell T."/>
            <person name="Goble A."/>
            <person name="Hamlin N."/>
            <person name="Hauser H."/>
            <person name="Holroyd S."/>
            <person name="Jagels K."/>
            <person name="Leather S."/>
            <person name="Moule S."/>
            <person name="Norberczak H."/>
            <person name="O'Neil S."/>
            <person name="Ormond D."/>
            <person name="Price C."/>
            <person name="Rabbinowitsch E."/>
            <person name="Rutter S."/>
            <person name="Sanders M."/>
            <person name="Saunders D."/>
            <person name="Seeger K."/>
            <person name="Sharp S."/>
            <person name="Simmonds M."/>
            <person name="Skelton J."/>
            <person name="Squares R."/>
            <person name="Squares S."/>
            <person name="Stevens K."/>
            <person name="Unwin L."/>
            <person name="Whitehead S."/>
            <person name="Barrell B.G."/>
            <person name="Maskell D.J."/>
        </authorList>
    </citation>
    <scope>NUCLEOTIDE SEQUENCE [LARGE SCALE GENOMIC DNA]</scope>
    <source>
        <strain>Tohama I / ATCC BAA-589 / NCTC 13251</strain>
    </source>
</reference>